<protein>
    <recommendedName>
        <fullName evidence="6">NAC domain-containing protein 16</fullName>
        <shortName evidence="6">ANAC016</shortName>
    </recommendedName>
    <alternativeName>
        <fullName evidence="7">Protein NTM1-like 3</fullName>
    </alternativeName>
</protein>
<dbReference type="EMBL" id="AC007454">
    <property type="protein sequence ID" value="AAD39614.1"/>
    <property type="status" value="ALT_SEQ"/>
    <property type="molecule type" value="Genomic_DNA"/>
</dbReference>
<dbReference type="EMBL" id="CP002684">
    <property type="protein sequence ID" value="AEE31682.1"/>
    <property type="molecule type" value="Genomic_DNA"/>
</dbReference>
<dbReference type="EMBL" id="CP002684">
    <property type="protein sequence ID" value="AEE31683.1"/>
    <property type="status" value="ALT_SEQ"/>
    <property type="molecule type" value="Genomic_DNA"/>
</dbReference>
<dbReference type="EMBL" id="BT030344">
    <property type="protein sequence ID" value="ABO38757.1"/>
    <property type="molecule type" value="mRNA"/>
</dbReference>
<dbReference type="EMBL" id="AB493493">
    <property type="protein sequence ID" value="BAH30331.1"/>
    <property type="molecule type" value="mRNA"/>
</dbReference>
<dbReference type="EMBL" id="AY084860">
    <property type="protein sequence ID" value="AAM67294.1"/>
    <property type="molecule type" value="mRNA"/>
</dbReference>
<dbReference type="PIR" id="A86466">
    <property type="entry name" value="A86466"/>
</dbReference>
<dbReference type="RefSeq" id="NP_001077648.1">
    <property type="nucleotide sequence ID" value="NM_001084179.1"/>
</dbReference>
<dbReference type="RefSeq" id="NP_564439.1">
    <property type="nucleotide sequence ID" value="NM_103141.4"/>
</dbReference>
<dbReference type="SMR" id="A4FVP6"/>
<dbReference type="FunCoup" id="A4FVP6">
    <property type="interactions" value="10"/>
</dbReference>
<dbReference type="IntAct" id="A4FVP6">
    <property type="interactions" value="2"/>
</dbReference>
<dbReference type="STRING" id="3702.A4FVP6"/>
<dbReference type="GlyGen" id="A4FVP6">
    <property type="glycosylation" value="1 site"/>
</dbReference>
<dbReference type="iPTMnet" id="A4FVP6"/>
<dbReference type="PaxDb" id="3702-AT1G34180.2"/>
<dbReference type="ProteomicsDB" id="251227"/>
<dbReference type="EnsemblPlants" id="AT1G34180.1">
    <property type="protein sequence ID" value="AT1G34180.1"/>
    <property type="gene ID" value="AT1G34180"/>
</dbReference>
<dbReference type="GeneID" id="840317"/>
<dbReference type="Gramene" id="AT1G34180.1">
    <property type="protein sequence ID" value="AT1G34180.1"/>
    <property type="gene ID" value="AT1G34180"/>
</dbReference>
<dbReference type="KEGG" id="ath:AT1G34180"/>
<dbReference type="Araport" id="AT1G34180"/>
<dbReference type="TAIR" id="AT1G34180">
    <property type="gene designation" value="NAC016"/>
</dbReference>
<dbReference type="eggNOG" id="ENOG502QT9T">
    <property type="taxonomic scope" value="Eukaryota"/>
</dbReference>
<dbReference type="HOGENOM" id="CLU_030918_1_0_1"/>
<dbReference type="InParanoid" id="A4FVP6"/>
<dbReference type="PhylomeDB" id="A4FVP6"/>
<dbReference type="PRO" id="PR:A4FVP6"/>
<dbReference type="Proteomes" id="UP000006548">
    <property type="component" value="Chromosome 1"/>
</dbReference>
<dbReference type="ExpressionAtlas" id="A4FVP6">
    <property type="expression patterns" value="baseline and differential"/>
</dbReference>
<dbReference type="GO" id="GO:0016020">
    <property type="term" value="C:membrane"/>
    <property type="evidence" value="ECO:0007669"/>
    <property type="project" value="UniProtKB-SubCell"/>
</dbReference>
<dbReference type="GO" id="GO:0005634">
    <property type="term" value="C:nucleus"/>
    <property type="evidence" value="ECO:0007669"/>
    <property type="project" value="UniProtKB-SubCell"/>
</dbReference>
<dbReference type="GO" id="GO:0003700">
    <property type="term" value="F:DNA-binding transcription factor activity"/>
    <property type="evidence" value="ECO:0000250"/>
    <property type="project" value="TAIR"/>
</dbReference>
<dbReference type="GO" id="GO:0000976">
    <property type="term" value="F:transcription cis-regulatory region binding"/>
    <property type="evidence" value="ECO:0000353"/>
    <property type="project" value="TAIR"/>
</dbReference>
<dbReference type="GO" id="GO:0045893">
    <property type="term" value="P:positive regulation of DNA-templated transcription"/>
    <property type="evidence" value="ECO:0000315"/>
    <property type="project" value="UniProtKB"/>
</dbReference>
<dbReference type="GO" id="GO:1900057">
    <property type="term" value="P:positive regulation of leaf senescence"/>
    <property type="evidence" value="ECO:0000315"/>
    <property type="project" value="UniProtKB"/>
</dbReference>
<dbReference type="FunFam" id="2.170.150.80:FF:000006">
    <property type="entry name" value="NAC domain-containing protein 100-like"/>
    <property type="match status" value="1"/>
</dbReference>
<dbReference type="Gene3D" id="2.170.150.80">
    <property type="entry name" value="NAC domain"/>
    <property type="match status" value="1"/>
</dbReference>
<dbReference type="InterPro" id="IPR003441">
    <property type="entry name" value="NAC-dom"/>
</dbReference>
<dbReference type="InterPro" id="IPR036093">
    <property type="entry name" value="NAC_dom_sf"/>
</dbReference>
<dbReference type="PANTHER" id="PTHR31744:SF216">
    <property type="entry name" value="NAC TRANSCRIPTION FACTOR"/>
    <property type="match status" value="1"/>
</dbReference>
<dbReference type="PANTHER" id="PTHR31744">
    <property type="entry name" value="PROTEIN CUP-SHAPED COTYLEDON 2-RELATED"/>
    <property type="match status" value="1"/>
</dbReference>
<dbReference type="Pfam" id="PF02365">
    <property type="entry name" value="NAM"/>
    <property type="match status" value="1"/>
</dbReference>
<dbReference type="SUPFAM" id="SSF101941">
    <property type="entry name" value="NAC domain"/>
    <property type="match status" value="1"/>
</dbReference>
<dbReference type="PROSITE" id="PS51005">
    <property type="entry name" value="NAC"/>
    <property type="match status" value="1"/>
</dbReference>
<evidence type="ECO:0000250" key="1">
    <source>
        <dbReference type="UniProtKB" id="Q949N0"/>
    </source>
</evidence>
<evidence type="ECO:0000255" key="2"/>
<evidence type="ECO:0000255" key="3">
    <source>
        <dbReference type="PROSITE-ProRule" id="PRU00353"/>
    </source>
</evidence>
<evidence type="ECO:0000269" key="4">
    <source>
    </source>
</evidence>
<evidence type="ECO:0000269" key="5">
    <source>
    </source>
</evidence>
<evidence type="ECO:0000303" key="6">
    <source>
    </source>
</evidence>
<evidence type="ECO:0000303" key="7">
    <source>
    </source>
</evidence>
<evidence type="ECO:0000305" key="8"/>
<evidence type="ECO:0000312" key="9">
    <source>
        <dbReference type="Araport" id="AT1G34180"/>
    </source>
</evidence>
<evidence type="ECO:0000312" key="10">
    <source>
        <dbReference type="EMBL" id="AAD39614.1"/>
    </source>
</evidence>
<evidence type="ECO:0000312" key="11">
    <source>
        <dbReference type="EMBL" id="AEE31682.1"/>
    </source>
</evidence>
<sequence>MVDSSRDSCFKAGKFSAPGFRFHPTDEELVVYYLKRKICCKKLRVNAIGVVDVYKVDPSELPGLSMLKTGDRQWFFFTPRNRKYPNAARSSRGTATGYWKATGKDRVIEYNSRSVGLKKTLVFYRGRAPNGERTDWVMHEYTMDEEELGRCKNAKEYYALYKLYKKSGAGPKNGEQYGAPFQEEEWVDSDSEDADSVAVPDYPVVRYENGPCVDDTKFCNPVKLQLEDIEKLLNEIPDAPGVNQRQFDEFVGVPQGNSAEVIQSTLLNNSSGEYIDPRTNGMFLPNGQLYNRDSSFQSHLNSFEATSGMAPLLDNEKEEYIEMNDLLIPELGASSTEKSTEFLNHGEFGDVNEYDQLFNDISVFQGTSTDLSCLSNFTNNTSGQRQQLLYEQFQYQTPENQLNNYMHPSTTLNQFTDNMWFKDDQAALYVQPPQSSSGAFTSQSTGVMPESMNPTMSVNPQYKEGQNGGGTRSQFSSALWELLESIPSTPASACEGPLNQTFVRMSSFSRIRFNGTSVTSRKVTVAKKRISNRGFLLLSIMGALCAIFWVFKATVGVMGRPLLS</sequence>
<reference key="1">
    <citation type="journal article" date="2000" name="Nature">
        <title>Sequence and analysis of chromosome 1 of the plant Arabidopsis thaliana.</title>
        <authorList>
            <person name="Theologis A."/>
            <person name="Ecker J.R."/>
            <person name="Palm C.J."/>
            <person name="Federspiel N.A."/>
            <person name="Kaul S."/>
            <person name="White O."/>
            <person name="Alonso J."/>
            <person name="Altafi H."/>
            <person name="Araujo R."/>
            <person name="Bowman C.L."/>
            <person name="Brooks S.Y."/>
            <person name="Buehler E."/>
            <person name="Chan A."/>
            <person name="Chao Q."/>
            <person name="Chen H."/>
            <person name="Cheuk R.F."/>
            <person name="Chin C.W."/>
            <person name="Chung M.K."/>
            <person name="Conn L."/>
            <person name="Conway A.B."/>
            <person name="Conway A.R."/>
            <person name="Creasy T.H."/>
            <person name="Dewar K."/>
            <person name="Dunn P."/>
            <person name="Etgu P."/>
            <person name="Feldblyum T.V."/>
            <person name="Feng J.-D."/>
            <person name="Fong B."/>
            <person name="Fujii C.Y."/>
            <person name="Gill J.E."/>
            <person name="Goldsmith A.D."/>
            <person name="Haas B."/>
            <person name="Hansen N.F."/>
            <person name="Hughes B."/>
            <person name="Huizar L."/>
            <person name="Hunter J.L."/>
            <person name="Jenkins J."/>
            <person name="Johnson-Hopson C."/>
            <person name="Khan S."/>
            <person name="Khaykin E."/>
            <person name="Kim C.J."/>
            <person name="Koo H.L."/>
            <person name="Kremenetskaia I."/>
            <person name="Kurtz D.B."/>
            <person name="Kwan A."/>
            <person name="Lam B."/>
            <person name="Langin-Hooper S."/>
            <person name="Lee A."/>
            <person name="Lee J.M."/>
            <person name="Lenz C.A."/>
            <person name="Li J.H."/>
            <person name="Li Y.-P."/>
            <person name="Lin X."/>
            <person name="Liu S.X."/>
            <person name="Liu Z.A."/>
            <person name="Luros J.S."/>
            <person name="Maiti R."/>
            <person name="Marziali A."/>
            <person name="Militscher J."/>
            <person name="Miranda M."/>
            <person name="Nguyen M."/>
            <person name="Nierman W.C."/>
            <person name="Osborne B.I."/>
            <person name="Pai G."/>
            <person name="Peterson J."/>
            <person name="Pham P.K."/>
            <person name="Rizzo M."/>
            <person name="Rooney T."/>
            <person name="Rowley D."/>
            <person name="Sakano H."/>
            <person name="Salzberg S.L."/>
            <person name="Schwartz J.R."/>
            <person name="Shinn P."/>
            <person name="Southwick A.M."/>
            <person name="Sun H."/>
            <person name="Tallon L.J."/>
            <person name="Tambunga G."/>
            <person name="Toriumi M.J."/>
            <person name="Town C.D."/>
            <person name="Utterback T."/>
            <person name="Van Aken S."/>
            <person name="Vaysberg M."/>
            <person name="Vysotskaia V.S."/>
            <person name="Walker M."/>
            <person name="Wu D."/>
            <person name="Yu G."/>
            <person name="Fraser C.M."/>
            <person name="Venter J.C."/>
            <person name="Davis R.W."/>
        </authorList>
    </citation>
    <scope>NUCLEOTIDE SEQUENCE [LARGE SCALE GENOMIC DNA]</scope>
    <source>
        <strain>cv. Columbia</strain>
    </source>
</reference>
<reference key="2">
    <citation type="journal article" date="2017" name="Plant J.">
        <title>Araport11: a complete reannotation of the Arabidopsis thaliana reference genome.</title>
        <authorList>
            <person name="Cheng C.Y."/>
            <person name="Krishnakumar V."/>
            <person name="Chan A.P."/>
            <person name="Thibaud-Nissen F."/>
            <person name="Schobel S."/>
            <person name="Town C.D."/>
        </authorList>
    </citation>
    <scope>GENOME REANNOTATION</scope>
    <source>
        <strain>cv. Columbia</strain>
    </source>
</reference>
<reference key="3">
    <citation type="submission" date="2007-03" db="EMBL/GenBank/DDBJ databases">
        <title>Arabidopsis ORF clones.</title>
        <authorList>
            <person name="Bautista V.R."/>
            <person name="Kim C.J."/>
            <person name="Chen H."/>
            <person name="Wu S.Y."/>
            <person name="De Los Reyes C."/>
            <person name="Ecker J.R."/>
        </authorList>
    </citation>
    <scope>NUCLEOTIDE SEQUENCE [MRNA]</scope>
    <source>
        <strain>cv. Columbia</strain>
    </source>
</reference>
<reference key="4">
    <citation type="submission" date="2009-03" db="EMBL/GenBank/DDBJ databases">
        <title>ORF cloning and analysis of Arabidopsis transcription factor genes.</title>
        <authorList>
            <person name="Fujita M."/>
            <person name="Mizukado S."/>
            <person name="Seki M."/>
            <person name="Shinozaki K."/>
            <person name="Mitsuda N."/>
            <person name="Takiguchi Y."/>
            <person name="Takagi M."/>
        </authorList>
    </citation>
    <scope>NUCLEOTIDE SEQUENCE [LARGE SCALE MRNA]</scope>
</reference>
<reference key="5">
    <citation type="submission" date="2002-03" db="EMBL/GenBank/DDBJ databases">
        <title>Full-length cDNA from Arabidopsis thaliana.</title>
        <authorList>
            <person name="Brover V.V."/>
            <person name="Troukhan M.E."/>
            <person name="Alexandrov N.A."/>
            <person name="Lu Y.-P."/>
            <person name="Flavell R.B."/>
            <person name="Feldmann K.A."/>
        </authorList>
    </citation>
    <scope>NUCLEOTIDE SEQUENCE [LARGE SCALE MRNA]</scope>
</reference>
<reference key="6">
    <citation type="journal article" date="2003" name="DNA Res.">
        <title>Comprehensive analysis of NAC family genes in Oryza sativa and Arabidopsis thaliana.</title>
        <authorList>
            <person name="Ooka H."/>
            <person name="Satoh K."/>
            <person name="Doi K."/>
            <person name="Nagata T."/>
            <person name="Otomo Y."/>
            <person name="Murakami K."/>
            <person name="Matsubara K."/>
            <person name="Osato N."/>
            <person name="Kawai J."/>
            <person name="Carninci P."/>
            <person name="Hayashizaki Y."/>
            <person name="Suzuki K."/>
            <person name="Kojima K."/>
            <person name="Takahara Y."/>
            <person name="Yamamoto K."/>
            <person name="Kikuchi S."/>
        </authorList>
    </citation>
    <scope>GENE FAMILY</scope>
    <scope>NOMENCLATURE</scope>
</reference>
<reference key="7">
    <citation type="journal article" date="2007" name="Nucleic Acids Res.">
        <title>Exploring membrane-associated NAC transcription factors in Arabidopsis: implications for membrane biology in genome regulation.</title>
        <authorList>
            <person name="Kim S.Y."/>
            <person name="Kim S.G."/>
            <person name="Kim Y.S."/>
            <person name="Seo P.J."/>
            <person name="Bae M."/>
            <person name="Yoon H.K."/>
            <person name="Park C.M."/>
        </authorList>
    </citation>
    <scope>GENE FAMILY</scope>
    <scope>NOMENCLATURE</scope>
    <scope>TISSUE SPECIFICITY</scope>
    <scope>INDUCTION</scope>
</reference>
<reference key="8">
    <citation type="journal article" date="2013" name="Plant Cell Physiol.">
        <title>Mutation of the Arabidopsis NAC016 transcription factor delays leaf senescence.</title>
        <authorList>
            <person name="Kim Y.S."/>
            <person name="Sakuraba Y."/>
            <person name="Han S.H."/>
            <person name="Yoo S.C."/>
            <person name="Paek N.C."/>
        </authorList>
    </citation>
    <scope>FUNCTION</scope>
    <scope>DEVELOPMENTAL STAGE</scope>
    <scope>DISRUPTION PHENOTYPE</scope>
</reference>
<gene>
    <name evidence="11" type="primary">NAC016</name>
    <name evidence="7" type="synonym">NTL3</name>
    <name evidence="9" type="ordered locus">At1g34180</name>
    <name evidence="10" type="ORF">F23M19.14</name>
</gene>
<organism>
    <name type="scientific">Arabidopsis thaliana</name>
    <name type="common">Mouse-ear cress</name>
    <dbReference type="NCBI Taxonomy" id="3702"/>
    <lineage>
        <taxon>Eukaryota</taxon>
        <taxon>Viridiplantae</taxon>
        <taxon>Streptophyta</taxon>
        <taxon>Embryophyta</taxon>
        <taxon>Tracheophyta</taxon>
        <taxon>Spermatophyta</taxon>
        <taxon>Magnoliopsida</taxon>
        <taxon>eudicotyledons</taxon>
        <taxon>Gunneridae</taxon>
        <taxon>Pentapetalae</taxon>
        <taxon>rosids</taxon>
        <taxon>malvids</taxon>
        <taxon>Brassicales</taxon>
        <taxon>Brassicaceae</taxon>
        <taxon>Camelineae</taxon>
        <taxon>Arabidopsis</taxon>
    </lineage>
</organism>
<keyword id="KW-0010">Activator</keyword>
<keyword id="KW-0238">DNA-binding</keyword>
<keyword id="KW-0472">Membrane</keyword>
<keyword id="KW-0539">Nucleus</keyword>
<keyword id="KW-1185">Reference proteome</keyword>
<keyword id="KW-0346">Stress response</keyword>
<keyword id="KW-0804">Transcription</keyword>
<keyword id="KW-0805">Transcription regulation</keyword>
<keyword id="KW-0812">Transmembrane</keyword>
<keyword id="KW-1133">Transmembrane helix</keyword>
<accession>A4FVP6</accession>
<accession>Q8LFG7</accession>
<accession>Q9XIC4</accession>
<name>NAC16_ARATH</name>
<feature type="chain" id="PRO_0000432442" description="NAC domain-containing protein 16">
    <location>
        <begin position="1"/>
        <end position="564"/>
    </location>
</feature>
<feature type="transmembrane region" description="Helical" evidence="2">
    <location>
        <begin position="535"/>
        <end position="555"/>
    </location>
</feature>
<feature type="domain" description="NAC" evidence="3">
    <location>
        <begin position="16"/>
        <end position="166"/>
    </location>
</feature>
<feature type="DNA-binding region" evidence="3">
    <location>
        <begin position="115"/>
        <end position="172"/>
    </location>
</feature>
<feature type="sequence conflict" description="In Ref. 5; AAM67294." evidence="8" ref="5">
    <original>V</original>
    <variation>I</variation>
    <location>
        <position position="45"/>
    </location>
</feature>
<feature type="sequence conflict" description="In Ref. 5; AAM67294." evidence="8" ref="5">
    <original>V</original>
    <variation>I</variation>
    <location>
        <position position="199"/>
    </location>
</feature>
<feature type="sequence conflict" description="In Ref. 5; AAM67294." evidence="8" ref="5">
    <original>G</original>
    <variation>V</variation>
    <location>
        <position position="465"/>
    </location>
</feature>
<feature type="sequence conflict" description="In Ref. 5; AAM67294." evidence="8" ref="5">
    <original>K</original>
    <variation>I</variation>
    <location>
        <position position="552"/>
    </location>
</feature>
<proteinExistence type="evidence at protein level"/>
<comment type="function">
    <text evidence="1 5">Transcriptional activator activated by proteolytic cleavage through regulated intramembrane proteolysis (RIP) (By similarity). Transcriptional activator that promotes leaf senescence by up-regulating senescence-associated genes in response to developmental and stress-induced senescence signals. Functions in salt and oxidative stress-responsive signaling pathways. Binds to the promoter of NAC029/NAP and NAC059/ORS1 genes (PubMed:23926065).</text>
</comment>
<comment type="interaction">
    <interactant intactId="EBI-25522702">
        <id>A4FVP6</id>
    </interactant>
    <interactant intactId="EBI-25522494">
        <id>O80995</id>
        <label>PDF1.3</label>
    </interactant>
    <organismsDiffer>false</organismsDiffer>
    <experiments>3</experiments>
</comment>
<comment type="interaction">
    <interactant intactId="EBI-25522702">
        <id>A4FVP6</id>
    </interactant>
    <interactant intactId="EBI-1792431">
        <id>Q9LVI4</id>
        <label>TIFY6B</label>
    </interactant>
    <organismsDiffer>false</organismsDiffer>
    <experiments>3</experiments>
</comment>
<comment type="subcellular location">
    <subcellularLocation>
        <location evidence="1">Membrane</location>
        <topology evidence="2">Single-pass membrane protein</topology>
    </subcellularLocation>
    <subcellularLocation>
        <location evidence="1 3">Nucleus</location>
    </subcellularLocation>
    <text evidence="1">Localized primarily in plasma membrane or endoplasmic reticulum membrane as dormant form and, upon specific stress or signal, is processed into a transcriptionally active and nuclear form after a proteolytic cleavage through regulated intramembrane proteolysis (RIP).</text>
</comment>
<comment type="tissue specificity">
    <text evidence="4">Expressed in roots, rosette leaves, shoot apex, stems and flowers.</text>
</comment>
<comment type="developmental stage">
    <text evidence="5">Induced during normal senescence.</text>
</comment>
<comment type="induction">
    <text evidence="4">By cold, salt, drought stress and methyl methanesulfonate (MMS) treatment.</text>
</comment>
<comment type="domain">
    <text evidence="3">The NAC domain includes a DNA binding domain and a dimerization domain.</text>
</comment>
<comment type="disruption phenotype">
    <text evidence="5">Stay-green phenotype during senescence, salt stress and oxidative stress.</text>
</comment>
<comment type="sequence caution" evidence="8">
    <conflict type="erroneous gene model prediction">
        <sequence resource="EMBL-CDS" id="AAD39614"/>
    </conflict>
</comment>
<comment type="sequence caution" evidence="8">
    <conflict type="erroneous gene model prediction">
        <sequence resource="EMBL-CDS" id="AEE31683"/>
    </conflict>
</comment>